<protein>
    <recommendedName>
        <fullName evidence="1">Putative transport protein HI_0035</fullName>
    </recommendedName>
</protein>
<dbReference type="EMBL" id="L42023">
    <property type="protein sequence ID" value="AAC21713.1"/>
    <property type="molecule type" value="Genomic_DNA"/>
</dbReference>
<dbReference type="PIR" id="I64140">
    <property type="entry name" value="I64140"/>
</dbReference>
<dbReference type="RefSeq" id="NP_438208.1">
    <property type="nucleotide sequence ID" value="NC_000907.1"/>
</dbReference>
<dbReference type="SMR" id="P44472"/>
<dbReference type="STRING" id="71421.HI_0035"/>
<dbReference type="EnsemblBacteria" id="AAC21713">
    <property type="protein sequence ID" value="AAC21713"/>
    <property type="gene ID" value="HI_0035"/>
</dbReference>
<dbReference type="KEGG" id="hin:HI_0035"/>
<dbReference type="PATRIC" id="fig|71421.8.peg.35"/>
<dbReference type="eggNOG" id="COG2985">
    <property type="taxonomic scope" value="Bacteria"/>
</dbReference>
<dbReference type="HOGENOM" id="CLU_035023_3_1_6"/>
<dbReference type="OrthoDB" id="5166626at2"/>
<dbReference type="PhylomeDB" id="P44472"/>
<dbReference type="BioCyc" id="HINF71421:G1GJ1-35-MONOMER"/>
<dbReference type="Proteomes" id="UP000000579">
    <property type="component" value="Chromosome"/>
</dbReference>
<dbReference type="GO" id="GO:0005886">
    <property type="term" value="C:plasma membrane"/>
    <property type="evidence" value="ECO:0000318"/>
    <property type="project" value="GO_Central"/>
</dbReference>
<dbReference type="GO" id="GO:0008324">
    <property type="term" value="F:monoatomic cation transmembrane transporter activity"/>
    <property type="evidence" value="ECO:0007669"/>
    <property type="project" value="InterPro"/>
</dbReference>
<dbReference type="GO" id="GO:0006813">
    <property type="term" value="P:potassium ion transport"/>
    <property type="evidence" value="ECO:0007669"/>
    <property type="project" value="InterPro"/>
</dbReference>
<dbReference type="Gene3D" id="3.30.70.1450">
    <property type="entry name" value="Regulator of K+ conductance, C-terminal domain"/>
    <property type="match status" value="2"/>
</dbReference>
<dbReference type="HAMAP" id="MF_01016">
    <property type="entry name" value="YidE"/>
    <property type="match status" value="1"/>
</dbReference>
<dbReference type="InterPro" id="IPR050144">
    <property type="entry name" value="AAE_transporter"/>
</dbReference>
<dbReference type="InterPro" id="IPR006037">
    <property type="entry name" value="RCK_C"/>
</dbReference>
<dbReference type="InterPro" id="IPR036721">
    <property type="entry name" value="RCK_C_sf"/>
</dbReference>
<dbReference type="InterPro" id="IPR023018">
    <property type="entry name" value="Transpt_YidE_put"/>
</dbReference>
<dbReference type="InterPro" id="IPR006512">
    <property type="entry name" value="YidE_YbjL"/>
</dbReference>
<dbReference type="NCBIfam" id="NF003007">
    <property type="entry name" value="PRK03818.1"/>
    <property type="match status" value="1"/>
</dbReference>
<dbReference type="NCBIfam" id="TIGR01625">
    <property type="entry name" value="YidE_YbjL_dupl"/>
    <property type="match status" value="2"/>
</dbReference>
<dbReference type="PANTHER" id="PTHR30445">
    <property type="entry name" value="K(+)_H(+) ANTIPORTER SUBUNIT KHTT"/>
    <property type="match status" value="1"/>
</dbReference>
<dbReference type="PANTHER" id="PTHR30445:SF3">
    <property type="entry name" value="TRANSPORT PROTEIN YIDE-RELATED"/>
    <property type="match status" value="1"/>
</dbReference>
<dbReference type="Pfam" id="PF06826">
    <property type="entry name" value="Asp-Al_Ex"/>
    <property type="match status" value="2"/>
</dbReference>
<dbReference type="Pfam" id="PF02080">
    <property type="entry name" value="TrkA_C"/>
    <property type="match status" value="1"/>
</dbReference>
<dbReference type="SUPFAM" id="SSF116726">
    <property type="entry name" value="TrkA C-terminal domain-like"/>
    <property type="match status" value="2"/>
</dbReference>
<dbReference type="PROSITE" id="PS51202">
    <property type="entry name" value="RCK_C"/>
    <property type="match status" value="2"/>
</dbReference>
<keyword id="KW-1003">Cell membrane</keyword>
<keyword id="KW-0472">Membrane</keyword>
<keyword id="KW-1185">Reference proteome</keyword>
<keyword id="KW-0677">Repeat</keyword>
<keyword id="KW-0812">Transmembrane</keyword>
<keyword id="KW-1133">Transmembrane helix</keyword>
<keyword id="KW-0813">Transport</keyword>
<evidence type="ECO:0000255" key="1">
    <source>
        <dbReference type="HAMAP-Rule" id="MF_01016"/>
    </source>
</evidence>
<accession>P44472</accession>
<proteinExistence type="inferred from homology"/>
<gene>
    <name type="ordered locus">HI_0035</name>
</gene>
<comment type="subcellular location">
    <subcellularLocation>
        <location evidence="1">Cell membrane</location>
        <topology evidence="1">Multi-pass membrane protein</topology>
    </subcellularLocation>
</comment>
<comment type="similarity">
    <text evidence="1">Belongs to the AAE transporter (TC 2.A.81) family. YidE subfamily.</text>
</comment>
<feature type="chain" id="PRO_0000208801" description="Putative transport protein HI_0035">
    <location>
        <begin position="1"/>
        <end position="551"/>
    </location>
</feature>
<feature type="transmembrane region" description="Helical" evidence="1">
    <location>
        <begin position="4"/>
        <end position="24"/>
    </location>
</feature>
<feature type="transmembrane region" description="Helical" evidence="1">
    <location>
        <begin position="28"/>
        <end position="48"/>
    </location>
</feature>
<feature type="transmembrane region" description="Helical" evidence="1">
    <location>
        <begin position="65"/>
        <end position="85"/>
    </location>
</feature>
<feature type="transmembrane region" description="Helical" evidence="1">
    <location>
        <begin position="95"/>
        <end position="115"/>
    </location>
</feature>
<feature type="transmembrane region" description="Helical" evidence="1">
    <location>
        <begin position="157"/>
        <end position="177"/>
    </location>
</feature>
<feature type="transmembrane region" description="Helical" evidence="1">
    <location>
        <begin position="370"/>
        <end position="390"/>
    </location>
</feature>
<feature type="transmembrane region" description="Helical" evidence="1">
    <location>
        <begin position="402"/>
        <end position="424"/>
    </location>
</feature>
<feature type="transmembrane region" description="Helical" evidence="1">
    <location>
        <begin position="438"/>
        <end position="458"/>
    </location>
</feature>
<feature type="transmembrane region" description="Helical" evidence="1">
    <location>
        <begin position="463"/>
        <end position="483"/>
    </location>
</feature>
<feature type="transmembrane region" description="Helical" evidence="1">
    <location>
        <begin position="492"/>
        <end position="512"/>
    </location>
</feature>
<feature type="transmembrane region" description="Helical" evidence="1">
    <location>
        <begin position="529"/>
        <end position="549"/>
    </location>
</feature>
<feature type="domain" description="RCK C-terminal 1" evidence="1">
    <location>
        <begin position="191"/>
        <end position="275"/>
    </location>
</feature>
<feature type="domain" description="RCK C-terminal 2" evidence="1">
    <location>
        <begin position="277"/>
        <end position="360"/>
    </location>
</feature>
<reference key="1">
    <citation type="journal article" date="1995" name="Science">
        <title>Whole-genome random sequencing and assembly of Haemophilus influenzae Rd.</title>
        <authorList>
            <person name="Fleischmann R.D."/>
            <person name="Adams M.D."/>
            <person name="White O."/>
            <person name="Clayton R.A."/>
            <person name="Kirkness E.F."/>
            <person name="Kerlavage A.R."/>
            <person name="Bult C.J."/>
            <person name="Tomb J.-F."/>
            <person name="Dougherty B.A."/>
            <person name="Merrick J.M."/>
            <person name="McKenney K."/>
            <person name="Sutton G.G."/>
            <person name="FitzHugh W."/>
            <person name="Fields C.A."/>
            <person name="Gocayne J.D."/>
            <person name="Scott J.D."/>
            <person name="Shirley R."/>
            <person name="Liu L.-I."/>
            <person name="Glodek A."/>
            <person name="Kelley J.M."/>
            <person name="Weidman J.F."/>
            <person name="Phillips C.A."/>
            <person name="Spriggs T."/>
            <person name="Hedblom E."/>
            <person name="Cotton M.D."/>
            <person name="Utterback T.R."/>
            <person name="Hanna M.C."/>
            <person name="Nguyen D.T."/>
            <person name="Saudek D.M."/>
            <person name="Brandon R.C."/>
            <person name="Fine L.D."/>
            <person name="Fritchman J.L."/>
            <person name="Fuhrmann J.L."/>
            <person name="Geoghagen N.S.M."/>
            <person name="Gnehm C.L."/>
            <person name="McDonald L.A."/>
            <person name="Small K.V."/>
            <person name="Fraser C.M."/>
            <person name="Smith H.O."/>
            <person name="Venter J.C."/>
        </authorList>
    </citation>
    <scope>NUCLEOTIDE SEQUENCE [LARGE SCALE GENOMIC DNA]</scope>
    <source>
        <strain>ATCC 51907 / DSM 11121 / KW20 / Rd</strain>
    </source>
</reference>
<name>Y035_HAEIN</name>
<sequence length="551" mass="59014">MSDIAITISLLALVAVIGLWIGHWKIRGVGLGIGGVLFGGIIVAHFTNQYGLKLDAHTLHFVQEFGLILFVYTIGIQVGPGFFSSLRKSGLKLNAFAILIILLGSIAVVLVHKIADVPLDIALGIYSGAVTNTPALGAGQQILAELGVPQTTVTMGVSYAMAYPFGICGILLAMWLIRLFFNVKVDDEAARFNAESSQDKESLHNISLKVTNQNLDGLTLIQIPGFSDEEVVCSRLKRDDMEIVPKASTEIRTNDILQLVGDDNSLAKMRLIIGHEVDAPTVAYSGEIRSERVVVTNEKVLGKKIRALGIHQKYGVVISRLNRAGIELVPTGNTTLQFGDVLHMVGRSDVLNQAISVIGNAQQKLLQVQMLPVFIGIGLGVLVGSIPFYIPGFPVALKLGLAGGPLVVALILARIGTIGKLYWFMPPSANLALREIGIVLFLAVVGLKSGGSFFDTLVNGSGLEWMGYGIFITFVPLIIVGTIARLYGKLNYLTICGLLAGSMTDPPALAFANEIKEDNGAAALSYATVYPLVMFLRIMSPQLLAVLLWAA</sequence>
<organism>
    <name type="scientific">Haemophilus influenzae (strain ATCC 51907 / DSM 11121 / KW20 / Rd)</name>
    <dbReference type="NCBI Taxonomy" id="71421"/>
    <lineage>
        <taxon>Bacteria</taxon>
        <taxon>Pseudomonadati</taxon>
        <taxon>Pseudomonadota</taxon>
        <taxon>Gammaproteobacteria</taxon>
        <taxon>Pasteurellales</taxon>
        <taxon>Pasteurellaceae</taxon>
        <taxon>Haemophilus</taxon>
    </lineage>
</organism>